<organism>
    <name type="scientific">Pseudoalteromonas translucida (strain TAC 125)</name>
    <dbReference type="NCBI Taxonomy" id="326442"/>
    <lineage>
        <taxon>Bacteria</taxon>
        <taxon>Pseudomonadati</taxon>
        <taxon>Pseudomonadota</taxon>
        <taxon>Gammaproteobacteria</taxon>
        <taxon>Alteromonadales</taxon>
        <taxon>Pseudoalteromonadaceae</taxon>
        <taxon>Pseudoalteromonas</taxon>
    </lineage>
</organism>
<proteinExistence type="inferred from homology"/>
<keyword id="KW-0028">Amino-acid biosynthesis</keyword>
<keyword id="KW-0368">Histidine biosynthesis</keyword>
<keyword id="KW-0378">Hydrolase</keyword>
<keyword id="KW-0486">Methionine biosynthesis</keyword>
<keyword id="KW-0511">Multifunctional enzyme</keyword>
<keyword id="KW-0521">NADP</keyword>
<keyword id="KW-0554">One-carbon metabolism</keyword>
<keyword id="KW-0560">Oxidoreductase</keyword>
<keyword id="KW-0658">Purine biosynthesis</keyword>
<keyword id="KW-1185">Reference proteome</keyword>
<protein>
    <recommendedName>
        <fullName evidence="1">Bifunctional protein FolD</fullName>
    </recommendedName>
    <domain>
        <recommendedName>
            <fullName evidence="1">Methylenetetrahydrofolate dehydrogenase</fullName>
            <ecNumber evidence="1">1.5.1.5</ecNumber>
        </recommendedName>
    </domain>
    <domain>
        <recommendedName>
            <fullName evidence="1">Methenyltetrahydrofolate cyclohydrolase</fullName>
            <ecNumber evidence="1">3.5.4.9</ecNumber>
        </recommendedName>
    </domain>
</protein>
<accession>Q3IF52</accession>
<comment type="function">
    <text evidence="1">Catalyzes the oxidation of 5,10-methylenetetrahydrofolate to 5,10-methenyltetrahydrofolate and then the hydrolysis of 5,10-methenyltetrahydrofolate to 10-formyltetrahydrofolate.</text>
</comment>
<comment type="catalytic activity">
    <reaction evidence="1">
        <text>(6R)-5,10-methylene-5,6,7,8-tetrahydrofolate + NADP(+) = (6R)-5,10-methenyltetrahydrofolate + NADPH</text>
        <dbReference type="Rhea" id="RHEA:22812"/>
        <dbReference type="ChEBI" id="CHEBI:15636"/>
        <dbReference type="ChEBI" id="CHEBI:57455"/>
        <dbReference type="ChEBI" id="CHEBI:57783"/>
        <dbReference type="ChEBI" id="CHEBI:58349"/>
        <dbReference type="EC" id="1.5.1.5"/>
    </reaction>
</comment>
<comment type="catalytic activity">
    <reaction evidence="1">
        <text>(6R)-5,10-methenyltetrahydrofolate + H2O = (6R)-10-formyltetrahydrofolate + H(+)</text>
        <dbReference type="Rhea" id="RHEA:23700"/>
        <dbReference type="ChEBI" id="CHEBI:15377"/>
        <dbReference type="ChEBI" id="CHEBI:15378"/>
        <dbReference type="ChEBI" id="CHEBI:57455"/>
        <dbReference type="ChEBI" id="CHEBI:195366"/>
        <dbReference type="EC" id="3.5.4.9"/>
    </reaction>
</comment>
<comment type="pathway">
    <text evidence="1">One-carbon metabolism; tetrahydrofolate interconversion.</text>
</comment>
<comment type="subunit">
    <text evidence="1">Homodimer.</text>
</comment>
<comment type="similarity">
    <text evidence="1">Belongs to the tetrahydrofolate dehydrogenase/cyclohydrolase family.</text>
</comment>
<gene>
    <name evidence="1" type="primary">folD</name>
    <name type="ordered locus">PSHAa2064</name>
</gene>
<dbReference type="EC" id="1.5.1.5" evidence="1"/>
<dbReference type="EC" id="3.5.4.9" evidence="1"/>
<dbReference type="EMBL" id="CR954246">
    <property type="protein sequence ID" value="CAI87120.1"/>
    <property type="molecule type" value="Genomic_DNA"/>
</dbReference>
<dbReference type="SMR" id="Q3IF52"/>
<dbReference type="STRING" id="326442.PSHAa2064"/>
<dbReference type="KEGG" id="pha:PSHAa2064"/>
<dbReference type="eggNOG" id="COG0190">
    <property type="taxonomic scope" value="Bacteria"/>
</dbReference>
<dbReference type="HOGENOM" id="CLU_034045_2_1_6"/>
<dbReference type="BioCyc" id="PHAL326442:PSHA_RS10220-MONOMER"/>
<dbReference type="UniPathway" id="UPA00193"/>
<dbReference type="Proteomes" id="UP000006843">
    <property type="component" value="Chromosome I"/>
</dbReference>
<dbReference type="GO" id="GO:0005829">
    <property type="term" value="C:cytosol"/>
    <property type="evidence" value="ECO:0007669"/>
    <property type="project" value="TreeGrafter"/>
</dbReference>
<dbReference type="GO" id="GO:0004477">
    <property type="term" value="F:methenyltetrahydrofolate cyclohydrolase activity"/>
    <property type="evidence" value="ECO:0007669"/>
    <property type="project" value="UniProtKB-UniRule"/>
</dbReference>
<dbReference type="GO" id="GO:0004488">
    <property type="term" value="F:methylenetetrahydrofolate dehydrogenase (NADP+) activity"/>
    <property type="evidence" value="ECO:0007669"/>
    <property type="project" value="UniProtKB-UniRule"/>
</dbReference>
<dbReference type="GO" id="GO:0000105">
    <property type="term" value="P:L-histidine biosynthetic process"/>
    <property type="evidence" value="ECO:0007669"/>
    <property type="project" value="UniProtKB-KW"/>
</dbReference>
<dbReference type="GO" id="GO:0009086">
    <property type="term" value="P:methionine biosynthetic process"/>
    <property type="evidence" value="ECO:0007669"/>
    <property type="project" value="UniProtKB-KW"/>
</dbReference>
<dbReference type="GO" id="GO:0006164">
    <property type="term" value="P:purine nucleotide biosynthetic process"/>
    <property type="evidence" value="ECO:0007669"/>
    <property type="project" value="UniProtKB-KW"/>
</dbReference>
<dbReference type="GO" id="GO:0035999">
    <property type="term" value="P:tetrahydrofolate interconversion"/>
    <property type="evidence" value="ECO:0007669"/>
    <property type="project" value="UniProtKB-UniRule"/>
</dbReference>
<dbReference type="CDD" id="cd01080">
    <property type="entry name" value="NAD_bind_m-THF_DH_Cyclohyd"/>
    <property type="match status" value="1"/>
</dbReference>
<dbReference type="FunFam" id="3.40.50.10860:FF:000001">
    <property type="entry name" value="Bifunctional protein FolD"/>
    <property type="match status" value="1"/>
</dbReference>
<dbReference type="FunFam" id="3.40.50.720:FF:000006">
    <property type="entry name" value="Bifunctional protein FolD"/>
    <property type="match status" value="1"/>
</dbReference>
<dbReference type="Gene3D" id="3.40.50.10860">
    <property type="entry name" value="Leucine Dehydrogenase, chain A, domain 1"/>
    <property type="match status" value="1"/>
</dbReference>
<dbReference type="Gene3D" id="3.40.50.720">
    <property type="entry name" value="NAD(P)-binding Rossmann-like Domain"/>
    <property type="match status" value="1"/>
</dbReference>
<dbReference type="HAMAP" id="MF_01576">
    <property type="entry name" value="THF_DHG_CYH"/>
    <property type="match status" value="1"/>
</dbReference>
<dbReference type="InterPro" id="IPR046346">
    <property type="entry name" value="Aminoacid_DH-like_N_sf"/>
</dbReference>
<dbReference type="InterPro" id="IPR036291">
    <property type="entry name" value="NAD(P)-bd_dom_sf"/>
</dbReference>
<dbReference type="InterPro" id="IPR000672">
    <property type="entry name" value="THF_DH/CycHdrlase"/>
</dbReference>
<dbReference type="InterPro" id="IPR020630">
    <property type="entry name" value="THF_DH/CycHdrlase_cat_dom"/>
</dbReference>
<dbReference type="InterPro" id="IPR020867">
    <property type="entry name" value="THF_DH/CycHdrlase_CS"/>
</dbReference>
<dbReference type="InterPro" id="IPR020631">
    <property type="entry name" value="THF_DH/CycHdrlase_NAD-bd_dom"/>
</dbReference>
<dbReference type="NCBIfam" id="NF008058">
    <property type="entry name" value="PRK10792.1"/>
    <property type="match status" value="1"/>
</dbReference>
<dbReference type="NCBIfam" id="NF010783">
    <property type="entry name" value="PRK14186.1"/>
    <property type="match status" value="1"/>
</dbReference>
<dbReference type="PANTHER" id="PTHR48099:SF5">
    <property type="entry name" value="C-1-TETRAHYDROFOLATE SYNTHASE, CYTOPLASMIC"/>
    <property type="match status" value="1"/>
</dbReference>
<dbReference type="PANTHER" id="PTHR48099">
    <property type="entry name" value="C-1-TETRAHYDROFOLATE SYNTHASE, CYTOPLASMIC-RELATED"/>
    <property type="match status" value="1"/>
</dbReference>
<dbReference type="Pfam" id="PF00763">
    <property type="entry name" value="THF_DHG_CYH"/>
    <property type="match status" value="1"/>
</dbReference>
<dbReference type="Pfam" id="PF02882">
    <property type="entry name" value="THF_DHG_CYH_C"/>
    <property type="match status" value="1"/>
</dbReference>
<dbReference type="PRINTS" id="PR00085">
    <property type="entry name" value="THFDHDRGNASE"/>
</dbReference>
<dbReference type="SUPFAM" id="SSF53223">
    <property type="entry name" value="Aminoacid dehydrogenase-like, N-terminal domain"/>
    <property type="match status" value="1"/>
</dbReference>
<dbReference type="SUPFAM" id="SSF51735">
    <property type="entry name" value="NAD(P)-binding Rossmann-fold domains"/>
    <property type="match status" value="1"/>
</dbReference>
<dbReference type="PROSITE" id="PS00767">
    <property type="entry name" value="THF_DHG_CYH_2"/>
    <property type="match status" value="1"/>
</dbReference>
<evidence type="ECO:0000255" key="1">
    <source>
        <dbReference type="HAMAP-Rule" id="MF_01576"/>
    </source>
</evidence>
<reference key="1">
    <citation type="journal article" date="2005" name="Genome Res.">
        <title>Coping with cold: the genome of the versatile marine Antarctica bacterium Pseudoalteromonas haloplanktis TAC125.</title>
        <authorList>
            <person name="Medigue C."/>
            <person name="Krin E."/>
            <person name="Pascal G."/>
            <person name="Barbe V."/>
            <person name="Bernsel A."/>
            <person name="Bertin P.N."/>
            <person name="Cheung F."/>
            <person name="Cruveiller S."/>
            <person name="D'Amico S."/>
            <person name="Duilio A."/>
            <person name="Fang G."/>
            <person name="Feller G."/>
            <person name="Ho C."/>
            <person name="Mangenot S."/>
            <person name="Marino G."/>
            <person name="Nilsson J."/>
            <person name="Parrilli E."/>
            <person name="Rocha E.P.C."/>
            <person name="Rouy Z."/>
            <person name="Sekowska A."/>
            <person name="Tutino M.L."/>
            <person name="Vallenet D."/>
            <person name="von Heijne G."/>
            <person name="Danchin A."/>
        </authorList>
    </citation>
    <scope>NUCLEOTIDE SEQUENCE [LARGE SCALE GENOMIC DNA]</scope>
    <source>
        <strain>TAC 125</strain>
    </source>
</reference>
<sequence>MTANIIDGKAIAKQVRSAVAQRVSERVAQNLRAPGLAVVLVGLDPASQVYVGSKRKACEEVGFISKSFDLPANTTEQTLLELIDELNNDQEIDGILVQLPLPEGLDVEKILERITPHKDVDGFHPYNIGRLAQRMPALRPCTPKGIITLLDSTGVRYKGLHAVVVGASNIVGRPMALELLLAGCTTTVCHKFTQDLETHVRRADLLVVAVGKPEFIPGDWVKEGAIVIDVGINRLDSGKLVGDVEYSVAEQKADFITPVPGGVGPMTVASLIENTLEACEKYHS</sequence>
<feature type="chain" id="PRO_0000268442" description="Bifunctional protein FolD">
    <location>
        <begin position="1"/>
        <end position="284"/>
    </location>
</feature>
<feature type="binding site" evidence="1">
    <location>
        <begin position="166"/>
        <end position="168"/>
    </location>
    <ligand>
        <name>NADP(+)</name>
        <dbReference type="ChEBI" id="CHEBI:58349"/>
    </ligand>
</feature>
<feature type="binding site" evidence="1">
    <location>
        <position position="232"/>
    </location>
    <ligand>
        <name>NADP(+)</name>
        <dbReference type="ChEBI" id="CHEBI:58349"/>
    </ligand>
</feature>
<name>FOLD_PSET1</name>